<name>AIM39_YEAS2</name>
<proteinExistence type="inferred from homology"/>
<dbReference type="EMBL" id="ACFL01000018">
    <property type="protein sequence ID" value="EEU08840.1"/>
    <property type="molecule type" value="Genomic_DNA"/>
</dbReference>
<dbReference type="SMR" id="C7GK20"/>
<dbReference type="OrthoDB" id="30198at4893"/>
<dbReference type="Proteomes" id="UP000008073">
    <property type="component" value="Unassembled WGS sequence"/>
</dbReference>
<dbReference type="GO" id="GO:0031966">
    <property type="term" value="C:mitochondrial membrane"/>
    <property type="evidence" value="ECO:0007669"/>
    <property type="project" value="UniProtKB-SubCell"/>
</dbReference>
<keyword id="KW-0472">Membrane</keyword>
<keyword id="KW-0496">Mitochondrion</keyword>
<keyword id="KW-0809">Transit peptide</keyword>
<keyword id="KW-0812">Transmembrane</keyword>
<keyword id="KW-1133">Transmembrane helix</keyword>
<sequence length="395" mass="45825">MWGLCKNHFPSNKIQVQERNKALKPKKSGSEHKTKQLFPVFNCKKKEKGVMIRFAILRNANTSLLSARSICLFTQAPTYCHVRLNTLNKSITTKRNSLTESKRHVHDGKHFFTTPHQQQQTKLGEIEEGHSPNIKGEDLRSIGQAITHQRNKRRKQIWSAIFGGIFGVILGYSLIYRVIYLKEQSFLPLFPSSKIRKLSSRDLKKVDVNQVQKLSKLRVLEILSGHDMIKEQYGVPLLDKDGNSPTLNEFSMWCEDQDPCVTGIVMEPDDKRDSSHTWYRIPFVCKWRITHRPISIRGTIDDLLNRIGLETSDLFEIISPERVYGSFKYEYPLQGDSHALHLWFHGEIELDDDSLIVYNGKYHVDVKLQEIDLFRREKNGQLVQYVLYKNEAGDK</sequence>
<evidence type="ECO:0000255" key="1"/>
<evidence type="ECO:0000305" key="2"/>
<feature type="transit peptide" description="Mitochondrion" evidence="1">
    <location>
        <begin position="1"/>
        <end status="unknown"/>
    </location>
</feature>
<feature type="chain" id="PRO_0000399848" description="Altered inheritance of mitochondria protein 39, mitochondrial">
    <location>
        <begin status="unknown"/>
        <end position="395"/>
    </location>
</feature>
<feature type="transmembrane region" description="Helical" evidence="1">
    <location>
        <begin position="156"/>
        <end position="176"/>
    </location>
</feature>
<protein>
    <recommendedName>
        <fullName>Altered inheritance of mitochondria protein 39, mitochondrial</fullName>
    </recommendedName>
</protein>
<organism>
    <name type="scientific">Saccharomyces cerevisiae (strain JAY291)</name>
    <name type="common">Baker's yeast</name>
    <dbReference type="NCBI Taxonomy" id="574961"/>
    <lineage>
        <taxon>Eukaryota</taxon>
        <taxon>Fungi</taxon>
        <taxon>Dikarya</taxon>
        <taxon>Ascomycota</taxon>
        <taxon>Saccharomycotina</taxon>
        <taxon>Saccharomycetes</taxon>
        <taxon>Saccharomycetales</taxon>
        <taxon>Saccharomycetaceae</taxon>
        <taxon>Saccharomyces</taxon>
    </lineage>
</organism>
<comment type="subcellular location">
    <subcellularLocation>
        <location evidence="2">Mitochondrion membrane</location>
        <topology evidence="2">Single-pass membrane protein</topology>
    </subcellularLocation>
</comment>
<comment type="similarity">
    <text evidence="2">Belongs to the AIM39 family.</text>
</comment>
<accession>C7GK20</accession>
<reference key="1">
    <citation type="journal article" date="2009" name="Genome Res.">
        <title>Genome structure of a Saccharomyces cerevisiae strain widely used in bioethanol production.</title>
        <authorList>
            <person name="Argueso J.L."/>
            <person name="Carazzolle M.F."/>
            <person name="Mieczkowski P.A."/>
            <person name="Duarte F.M."/>
            <person name="Netto O.V.C."/>
            <person name="Missawa S.K."/>
            <person name="Galzerani F."/>
            <person name="Costa G.G.L."/>
            <person name="Vidal R.O."/>
            <person name="Noronha M.F."/>
            <person name="Dominska M."/>
            <person name="Andrietta M.G.S."/>
            <person name="Andrietta S.R."/>
            <person name="Cunha A.F."/>
            <person name="Gomes L.H."/>
            <person name="Tavares F.C.A."/>
            <person name="Alcarde A.R."/>
            <person name="Dietrich F.S."/>
            <person name="McCusker J.H."/>
            <person name="Petes T.D."/>
            <person name="Pereira G.A.G."/>
        </authorList>
    </citation>
    <scope>NUCLEOTIDE SEQUENCE [LARGE SCALE GENOMIC DNA]</scope>
    <source>
        <strain>JAY291</strain>
    </source>
</reference>
<gene>
    <name type="primary">AIM39</name>
    <name type="ORF">C1Q_00534</name>
</gene>